<reference key="1">
    <citation type="journal article" date="1992" name="Plant Physiol.">
        <title>Nucleotide sequence of a cDNA encoding NADP-sorbitol-6-phosphate dehydrogenase from apple.</title>
        <authorList>
            <person name="Kanayama Y."/>
            <person name="Mori H."/>
            <person name="Imaseki H."/>
            <person name="Yamaki S."/>
        </authorList>
    </citation>
    <scope>NUCLEOTIDE SEQUENCE</scope>
</reference>
<reference key="2">
    <citation type="online journal article" date="1998" name="Plant Gene Register">
        <title>Genomic nucleotide sequence of NADP sorbitol-6-phosphate dehydrogenase (NADP-S6PDH) gene from apple.</title>
        <authorList>
            <person name="Bains H.S."/>
            <person name="Tao R."/>
            <person name="Uratsu S.L."/>
            <person name="Dandekar A.M."/>
        </authorList>
        <locator>PGR98-193</locator>
    </citation>
    <scope>NUCLEOTIDE SEQUENCE</scope>
    <source>
        <strain>cv. Greensleeves</strain>
    </source>
</reference>
<proteinExistence type="evidence at transcript level"/>
<name>S6PD_MALDO</name>
<evidence type="ECO:0000250" key="1"/>
<evidence type="ECO:0000305" key="2"/>
<sequence>MSTVTLSSGYEMPVIGLGLWRLEKDELKEVILNAIKIGYRHFDCAAHYKSEADVGEALAEAFKTGLVKREELFITTKIWNSDHGHVVEACKNSLEKLQIDYLDLYLVHYPMPTKHNAIGKTASLLGEDKVLDIDVTISLQQTWEGMEKTVSLGLVRSIGLSNYELFLTRDCLAYSKIKPAVSQFETHPYFQRDSLVKFCMKHGVLPTAHTPLGGAAANKDMFGSVSPLDDPVLNDVAKKYGKSVAQICLRWGIQRKTAVIPKSSKIQRLKENLEVLEFQLSDEDMQLIYSIDRKYRTSLPSKTWGLDVYA</sequence>
<gene>
    <name type="primary">S6PDH</name>
</gene>
<protein>
    <recommendedName>
        <fullName>NADP-dependent D-sorbitol-6-phosphate dehydrogenase</fullName>
        <ecNumber>1.1.1.200</ecNumber>
    </recommendedName>
    <alternativeName>
        <fullName>Aldose-6-phosphate reductase [NADPH]</fullName>
    </alternativeName>
    <alternativeName>
        <fullName>NADP-S6PDH</fullName>
    </alternativeName>
</protein>
<feature type="chain" id="PRO_0000124657" description="NADP-dependent D-sorbitol-6-phosphate dehydrogenase">
    <location>
        <begin position="1"/>
        <end position="310"/>
    </location>
</feature>
<feature type="active site" description="Proton donor" evidence="1">
    <location>
        <position position="48"/>
    </location>
</feature>
<feature type="binding site" evidence="1">
    <location>
        <position position="108"/>
    </location>
    <ligand>
        <name>substrate</name>
    </ligand>
</feature>
<feature type="binding site" evidence="1">
    <location>
        <begin position="210"/>
        <end position="272"/>
    </location>
    <ligand>
        <name>NADP(+)</name>
        <dbReference type="ChEBI" id="CHEBI:58349"/>
    </ligand>
</feature>
<feature type="site" description="Lowers pKa of active site Tyr" evidence="1">
    <location>
        <position position="77"/>
    </location>
</feature>
<keyword id="KW-0521">NADP</keyword>
<keyword id="KW-0560">Oxidoreductase</keyword>
<dbReference type="EC" id="1.1.1.200"/>
<dbReference type="EMBL" id="D11080">
    <property type="protein sequence ID" value="BAA01853.1"/>
    <property type="molecule type" value="mRNA"/>
</dbReference>
<dbReference type="EMBL" id="AF057134">
    <property type="protein sequence ID" value="AAC97607.1"/>
    <property type="molecule type" value="Genomic_DNA"/>
</dbReference>
<dbReference type="PIR" id="T17013">
    <property type="entry name" value="T17013"/>
</dbReference>
<dbReference type="RefSeq" id="NP_001280957.1">
    <property type="nucleotide sequence ID" value="NM_001294028.1"/>
</dbReference>
<dbReference type="SMR" id="P28475"/>
<dbReference type="GeneID" id="103445158"/>
<dbReference type="KEGG" id="mdm:103445158"/>
<dbReference type="OrthoDB" id="416253at2759"/>
<dbReference type="BioCyc" id="MetaCyc:MONOMER-11700"/>
<dbReference type="BRENDA" id="1.1.1.200">
    <property type="organism ID" value="3164"/>
</dbReference>
<dbReference type="GO" id="GO:0004033">
    <property type="term" value="F:aldo-keto reductase (NADPH) activity"/>
    <property type="evidence" value="ECO:0007669"/>
    <property type="project" value="TreeGrafter"/>
</dbReference>
<dbReference type="GO" id="GO:0047641">
    <property type="term" value="F:aldose-6-phosphate reductase (NADPH) activity"/>
    <property type="evidence" value="ECO:0007669"/>
    <property type="project" value="UniProtKB-EC"/>
</dbReference>
<dbReference type="CDD" id="cd19112">
    <property type="entry name" value="AKR_AKR2A1-2"/>
    <property type="match status" value="1"/>
</dbReference>
<dbReference type="FunFam" id="3.20.20.100:FF:000019">
    <property type="entry name" value="NADP-dependent D-sorbitol-6-phosphate dehydrogenase"/>
    <property type="match status" value="1"/>
</dbReference>
<dbReference type="Gene3D" id="3.20.20.100">
    <property type="entry name" value="NADP-dependent oxidoreductase domain"/>
    <property type="match status" value="1"/>
</dbReference>
<dbReference type="InterPro" id="IPR020471">
    <property type="entry name" value="AKR"/>
</dbReference>
<dbReference type="InterPro" id="IPR044485">
    <property type="entry name" value="AKR2A1"/>
</dbReference>
<dbReference type="InterPro" id="IPR018170">
    <property type="entry name" value="Aldo/ket_reductase_CS"/>
</dbReference>
<dbReference type="InterPro" id="IPR023210">
    <property type="entry name" value="NADP_OxRdtase_dom"/>
</dbReference>
<dbReference type="InterPro" id="IPR036812">
    <property type="entry name" value="NADP_OxRdtase_dom_sf"/>
</dbReference>
<dbReference type="PANTHER" id="PTHR43827">
    <property type="entry name" value="2,5-DIKETO-D-GLUCONIC ACID REDUCTASE"/>
    <property type="match status" value="1"/>
</dbReference>
<dbReference type="PANTHER" id="PTHR43827:SF3">
    <property type="entry name" value="NADP-DEPENDENT OXIDOREDUCTASE DOMAIN-CONTAINING PROTEIN"/>
    <property type="match status" value="1"/>
</dbReference>
<dbReference type="Pfam" id="PF00248">
    <property type="entry name" value="Aldo_ket_red"/>
    <property type="match status" value="1"/>
</dbReference>
<dbReference type="PIRSF" id="PIRSF000097">
    <property type="entry name" value="AKR"/>
    <property type="match status" value="1"/>
</dbReference>
<dbReference type="PRINTS" id="PR00069">
    <property type="entry name" value="ALDKETRDTASE"/>
</dbReference>
<dbReference type="SUPFAM" id="SSF51430">
    <property type="entry name" value="NAD(P)-linked oxidoreductase"/>
    <property type="match status" value="1"/>
</dbReference>
<dbReference type="PROSITE" id="PS00798">
    <property type="entry name" value="ALDOKETO_REDUCTASE_1"/>
    <property type="match status" value="1"/>
</dbReference>
<dbReference type="PROSITE" id="PS00062">
    <property type="entry name" value="ALDOKETO_REDUCTASE_2"/>
    <property type="match status" value="1"/>
</dbReference>
<dbReference type="PROSITE" id="PS00063">
    <property type="entry name" value="ALDOKETO_REDUCTASE_3"/>
    <property type="match status" value="1"/>
</dbReference>
<organism>
    <name type="scientific">Malus domestica</name>
    <name type="common">Apple</name>
    <name type="synonym">Pyrus malus</name>
    <dbReference type="NCBI Taxonomy" id="3750"/>
    <lineage>
        <taxon>Eukaryota</taxon>
        <taxon>Viridiplantae</taxon>
        <taxon>Streptophyta</taxon>
        <taxon>Embryophyta</taxon>
        <taxon>Tracheophyta</taxon>
        <taxon>Spermatophyta</taxon>
        <taxon>Magnoliopsida</taxon>
        <taxon>eudicotyledons</taxon>
        <taxon>Gunneridae</taxon>
        <taxon>Pentapetalae</taxon>
        <taxon>rosids</taxon>
        <taxon>fabids</taxon>
        <taxon>Rosales</taxon>
        <taxon>Rosaceae</taxon>
        <taxon>Amygdaloideae</taxon>
        <taxon>Maleae</taxon>
        <taxon>Malus</taxon>
    </lineage>
</organism>
<accession>P28475</accession>
<comment type="function">
    <text>Synthesizes sorbitol-6-phosphate, a key intermediate in the synthesis of sorbitol which is a major photosynthetic product in many members of the Rosaceae family.</text>
</comment>
<comment type="catalytic activity">
    <reaction>
        <text>D-sorbitol 6-phosphate + NADP(+) = aldehydo-D-glucose 6-phosphate + NADPH + H(+)</text>
        <dbReference type="Rhea" id="RHEA:20037"/>
        <dbReference type="ChEBI" id="CHEBI:15378"/>
        <dbReference type="ChEBI" id="CHEBI:57584"/>
        <dbReference type="ChEBI" id="CHEBI:57783"/>
        <dbReference type="ChEBI" id="CHEBI:58349"/>
        <dbReference type="ChEBI" id="CHEBI:60084"/>
        <dbReference type="EC" id="1.1.1.200"/>
    </reaction>
</comment>
<comment type="similarity">
    <text evidence="2">Belongs to the aldo/keto reductase family.</text>
</comment>